<protein>
    <recommendedName>
        <fullName evidence="1">3-methyl-2-oxobutanoate hydroxymethyltransferase</fullName>
        <ecNumber evidence="1">2.1.2.11</ecNumber>
    </recommendedName>
    <alternativeName>
        <fullName evidence="1">Ketopantoate hydroxymethyltransferase</fullName>
        <shortName evidence="1">KPHMT</shortName>
    </alternativeName>
</protein>
<reference key="1">
    <citation type="journal article" date="2000" name="Science">
        <title>Complete genome sequence of Neisseria meningitidis serogroup B strain MC58.</title>
        <authorList>
            <person name="Tettelin H."/>
            <person name="Saunders N.J."/>
            <person name="Heidelberg J.F."/>
            <person name="Jeffries A.C."/>
            <person name="Nelson K.E."/>
            <person name="Eisen J.A."/>
            <person name="Ketchum K.A."/>
            <person name="Hood D.W."/>
            <person name="Peden J.F."/>
            <person name="Dodson R.J."/>
            <person name="Nelson W.C."/>
            <person name="Gwinn M.L."/>
            <person name="DeBoy R.T."/>
            <person name="Peterson J.D."/>
            <person name="Hickey E.K."/>
            <person name="Haft D.H."/>
            <person name="Salzberg S.L."/>
            <person name="White O."/>
            <person name="Fleischmann R.D."/>
            <person name="Dougherty B.A."/>
            <person name="Mason T.M."/>
            <person name="Ciecko A."/>
            <person name="Parksey D.S."/>
            <person name="Blair E."/>
            <person name="Cittone H."/>
            <person name="Clark E.B."/>
            <person name="Cotton M.D."/>
            <person name="Utterback T.R."/>
            <person name="Khouri H.M."/>
            <person name="Qin H."/>
            <person name="Vamathevan J.J."/>
            <person name="Gill J."/>
            <person name="Scarlato V."/>
            <person name="Masignani V."/>
            <person name="Pizza M."/>
            <person name="Grandi G."/>
            <person name="Sun L."/>
            <person name="Smith H.O."/>
            <person name="Fraser C.M."/>
            <person name="Moxon E.R."/>
            <person name="Rappuoli R."/>
            <person name="Venter J.C."/>
        </authorList>
    </citation>
    <scope>NUCLEOTIDE SEQUENCE [LARGE SCALE GENOMIC DNA]</scope>
    <source>
        <strain>ATCC BAA-335 / MC58</strain>
    </source>
</reference>
<reference key="2">
    <citation type="journal article" date="2005" name="Proteins">
        <title>Structural analysis of a set of proteins resulting from a bacterial genomics project.</title>
        <authorList>
            <person name="Badger J."/>
            <person name="Sauder J.M."/>
            <person name="Adams J.M."/>
            <person name="Antonysamy S."/>
            <person name="Bain K."/>
            <person name="Bergseid M.G."/>
            <person name="Buchanan S.G."/>
            <person name="Buchanan M.D."/>
            <person name="Batiyenko Y."/>
            <person name="Christopher J.A."/>
            <person name="Emtage S."/>
            <person name="Eroshkina A."/>
            <person name="Feil I."/>
            <person name="Furlong E.B."/>
            <person name="Gajiwala K.S."/>
            <person name="Gao X."/>
            <person name="He D."/>
            <person name="Hendle J."/>
            <person name="Huber A."/>
            <person name="Hoda K."/>
            <person name="Kearins P."/>
            <person name="Kissinger C."/>
            <person name="Laubert B."/>
            <person name="Lewis H.A."/>
            <person name="Lin J."/>
            <person name="Loomis K."/>
            <person name="Lorimer D."/>
            <person name="Louie G."/>
            <person name="Maletic M."/>
            <person name="Marsh C.D."/>
            <person name="Miller I."/>
            <person name="Molinari J."/>
            <person name="Muller-Dieckmann H.J."/>
            <person name="Newman J.M."/>
            <person name="Noland B.W."/>
            <person name="Pagarigan B."/>
            <person name="Park F."/>
            <person name="Peat T.S."/>
            <person name="Post K.W."/>
            <person name="Radojicic S."/>
            <person name="Ramos A."/>
            <person name="Romero R."/>
            <person name="Rutter M.E."/>
            <person name="Sanderson W.E."/>
            <person name="Schwinn K.D."/>
            <person name="Tresser J."/>
            <person name="Winhoven J."/>
            <person name="Wright T.A."/>
            <person name="Wu L."/>
            <person name="Xu J."/>
            <person name="Harris T.J.R."/>
        </authorList>
    </citation>
    <scope>X-RAY CRYSTALLOGRAPHY (1.8 ANGSTROMS) OF 2-263 IN COMPLEX WITH SUBSTRATE AND SODIUM ION</scope>
    <scope>SUBUNIT</scope>
</reference>
<keyword id="KW-0002">3D-structure</keyword>
<keyword id="KW-0963">Cytoplasm</keyword>
<keyword id="KW-0460">Magnesium</keyword>
<keyword id="KW-0479">Metal-binding</keyword>
<keyword id="KW-0566">Pantothenate biosynthesis</keyword>
<keyword id="KW-1185">Reference proteome</keyword>
<keyword id="KW-0808">Transferase</keyword>
<evidence type="ECO:0000255" key="1">
    <source>
        <dbReference type="HAMAP-Rule" id="MF_00156"/>
    </source>
</evidence>
<evidence type="ECO:0000305" key="2">
    <source>
    </source>
</evidence>
<evidence type="ECO:0007829" key="3">
    <source>
        <dbReference type="PDB" id="1O66"/>
    </source>
</evidence>
<organism>
    <name type="scientific">Neisseria meningitidis serogroup B (strain ATCC BAA-335 / MC58)</name>
    <dbReference type="NCBI Taxonomy" id="122586"/>
    <lineage>
        <taxon>Bacteria</taxon>
        <taxon>Pseudomonadati</taxon>
        <taxon>Pseudomonadota</taxon>
        <taxon>Betaproteobacteria</taxon>
        <taxon>Neisseriales</taxon>
        <taxon>Neisseriaceae</taxon>
        <taxon>Neisseria</taxon>
    </lineage>
</organism>
<feature type="chain" id="PRO_0000184867" description="3-methyl-2-oxobutanoate hydroxymethyltransferase">
    <location>
        <begin position="1"/>
        <end position="263"/>
    </location>
</feature>
<feature type="active site" description="Proton acceptor" evidence="1">
    <location>
        <position position="179"/>
    </location>
</feature>
<feature type="binding site">
    <location>
        <begin position="43"/>
        <end position="44"/>
    </location>
    <ligand>
        <name>3-methyl-2-oxobutanoate</name>
        <dbReference type="ChEBI" id="CHEBI:11851"/>
    </ligand>
</feature>
<feature type="binding site" evidence="1">
    <location>
        <position position="43"/>
    </location>
    <ligand>
        <name>Mg(2+)</name>
        <dbReference type="ChEBI" id="CHEBI:18420"/>
    </ligand>
</feature>
<feature type="binding site">
    <location>
        <position position="82"/>
    </location>
    <ligand>
        <name>3-methyl-2-oxobutanoate</name>
        <dbReference type="ChEBI" id="CHEBI:11851"/>
    </ligand>
</feature>
<feature type="binding site" evidence="1">
    <location>
        <position position="82"/>
    </location>
    <ligand>
        <name>Mg(2+)</name>
        <dbReference type="ChEBI" id="CHEBI:18420"/>
    </ligand>
</feature>
<feature type="binding site">
    <location>
        <position position="111"/>
    </location>
    <ligand>
        <name>3-methyl-2-oxobutanoate</name>
        <dbReference type="ChEBI" id="CHEBI:11851"/>
    </ligand>
</feature>
<feature type="binding site" evidence="1">
    <location>
        <position position="113"/>
    </location>
    <ligand>
        <name>Mg(2+)</name>
        <dbReference type="ChEBI" id="CHEBI:18420"/>
    </ligand>
</feature>
<feature type="helix" evidence="3">
    <location>
        <begin position="4"/>
        <end position="13"/>
    </location>
</feature>
<feature type="strand" evidence="3">
    <location>
        <begin position="17"/>
        <end position="21"/>
    </location>
</feature>
<feature type="helix" evidence="3">
    <location>
        <begin position="25"/>
        <end position="33"/>
    </location>
</feature>
<feature type="strand" evidence="3">
    <location>
        <begin position="38"/>
        <end position="41"/>
    </location>
</feature>
<feature type="helix" evidence="3">
    <location>
        <begin position="45"/>
        <end position="48"/>
    </location>
</feature>
<feature type="strand" evidence="3">
    <location>
        <begin position="53"/>
        <end position="55"/>
    </location>
</feature>
<feature type="helix" evidence="3">
    <location>
        <begin position="60"/>
        <end position="73"/>
    </location>
</feature>
<feature type="strand" evidence="3">
    <location>
        <begin position="75"/>
        <end position="82"/>
    </location>
</feature>
<feature type="strand" evidence="3">
    <location>
        <begin position="87"/>
        <end position="90"/>
    </location>
</feature>
<feature type="helix" evidence="3">
    <location>
        <begin position="92"/>
        <end position="104"/>
    </location>
</feature>
<feature type="strand" evidence="3">
    <location>
        <begin position="108"/>
        <end position="113"/>
    </location>
</feature>
<feature type="helix" evidence="3">
    <location>
        <begin position="116"/>
        <end position="118"/>
    </location>
</feature>
<feature type="helix" evidence="3">
    <location>
        <begin position="119"/>
        <end position="127"/>
    </location>
</feature>
<feature type="strand" evidence="3">
    <location>
        <begin position="132"/>
        <end position="138"/>
    </location>
</feature>
<feature type="helix" evidence="3">
    <location>
        <begin position="140"/>
        <end position="142"/>
    </location>
</feature>
<feature type="helix" evidence="3">
    <location>
        <begin position="158"/>
        <end position="170"/>
    </location>
</feature>
<feature type="strand" evidence="3">
    <location>
        <begin position="174"/>
        <end position="180"/>
    </location>
</feature>
<feature type="helix" evidence="3">
    <location>
        <begin position="183"/>
        <end position="192"/>
    </location>
</feature>
<feature type="strand" evidence="3">
    <location>
        <begin position="197"/>
        <end position="202"/>
    </location>
</feature>
<feature type="strand" evidence="3">
    <location>
        <begin position="206"/>
        <end position="211"/>
    </location>
</feature>
<feature type="helix" evidence="3">
    <location>
        <begin position="213"/>
        <end position="216"/>
    </location>
</feature>
<feature type="strand" evidence="3">
    <location>
        <begin position="220"/>
        <end position="223"/>
    </location>
</feature>
<feature type="helix" evidence="3">
    <location>
        <begin position="238"/>
        <end position="250"/>
    </location>
</feature>
<feature type="helix" evidence="3">
    <location>
        <begin position="257"/>
        <end position="259"/>
    </location>
</feature>
<proteinExistence type="evidence at protein level"/>
<sequence>MITVNTLQKMKAAGEKIAMLTAYESSFAALMDDAGVEMLLVGDSLGMAVQGRKSTLPVSLRDMCYHTECVARGAKNAMIVSDLPFGAYQQSKEQAFAAAAELMAAGAHMVKLEGGVWMAETTEFLQMRGIPVCAHIGLTPQSVFAFGGYKVQGRGGKAQALLNDAKAHDDAGAAVVLMECVLAELAKKVTETVSCPTIGIGAGADCDGQVLVMHDMLGIFPGKTAKFVKNFMQGHDSVQAAVRAYVAEVKAKTFPAAEHIFAD</sequence>
<accession>Q9JZW6</accession>
<name>PANB_NEIMB</name>
<gene>
    <name evidence="1" type="primary">panB</name>
    <name type="ordered locus">NMB0870</name>
</gene>
<dbReference type="EC" id="2.1.2.11" evidence="1"/>
<dbReference type="EMBL" id="AE002098">
    <property type="protein sequence ID" value="AAF41281.1"/>
    <property type="molecule type" value="Genomic_DNA"/>
</dbReference>
<dbReference type="PIR" id="F81148">
    <property type="entry name" value="F81148"/>
</dbReference>
<dbReference type="RefSeq" id="NP_273911.1">
    <property type="nucleotide sequence ID" value="NC_003112.2"/>
</dbReference>
<dbReference type="RefSeq" id="WP_002222670.1">
    <property type="nucleotide sequence ID" value="NC_003112.2"/>
</dbReference>
<dbReference type="PDB" id="1O66">
    <property type="method" value="X-ray"/>
    <property type="resolution" value="1.75 A"/>
    <property type="chains" value="A/B/C/D/E=2-263"/>
</dbReference>
<dbReference type="PDB" id="1O68">
    <property type="method" value="X-ray"/>
    <property type="resolution" value="2.10 A"/>
    <property type="chains" value="A/B/C/D/E=2-263"/>
</dbReference>
<dbReference type="PDBsum" id="1O66"/>
<dbReference type="PDBsum" id="1O68"/>
<dbReference type="SMR" id="Q9JZW6"/>
<dbReference type="FunCoup" id="Q9JZW6">
    <property type="interactions" value="434"/>
</dbReference>
<dbReference type="STRING" id="122586.NMB0870"/>
<dbReference type="DrugBank" id="DB04074">
    <property type="generic name" value="alpha-Ketoisovalerate"/>
</dbReference>
<dbReference type="PaxDb" id="122586-NMB0870"/>
<dbReference type="KEGG" id="nme:NMB0870"/>
<dbReference type="PATRIC" id="fig|122586.8.peg.1083"/>
<dbReference type="HOGENOM" id="CLU_036645_1_0_4"/>
<dbReference type="InParanoid" id="Q9JZW6"/>
<dbReference type="OrthoDB" id="9781789at2"/>
<dbReference type="UniPathway" id="UPA00028">
    <property type="reaction ID" value="UER00003"/>
</dbReference>
<dbReference type="EvolutionaryTrace" id="Q9JZW6"/>
<dbReference type="Proteomes" id="UP000000425">
    <property type="component" value="Chromosome"/>
</dbReference>
<dbReference type="GO" id="GO:0005737">
    <property type="term" value="C:cytoplasm"/>
    <property type="evidence" value="ECO:0000318"/>
    <property type="project" value="GO_Central"/>
</dbReference>
<dbReference type="GO" id="GO:0003864">
    <property type="term" value="F:3-methyl-2-oxobutanoate hydroxymethyltransferase activity"/>
    <property type="evidence" value="ECO:0000318"/>
    <property type="project" value="GO_Central"/>
</dbReference>
<dbReference type="GO" id="GO:0000287">
    <property type="term" value="F:magnesium ion binding"/>
    <property type="evidence" value="ECO:0000318"/>
    <property type="project" value="GO_Central"/>
</dbReference>
<dbReference type="GO" id="GO:0015940">
    <property type="term" value="P:pantothenate biosynthetic process"/>
    <property type="evidence" value="ECO:0000318"/>
    <property type="project" value="GO_Central"/>
</dbReference>
<dbReference type="CDD" id="cd06557">
    <property type="entry name" value="KPHMT-like"/>
    <property type="match status" value="1"/>
</dbReference>
<dbReference type="FunFam" id="3.20.20.60:FF:000037">
    <property type="entry name" value="3-methyl-2-oxobutanoate hydroxymethyltransferase"/>
    <property type="match status" value="1"/>
</dbReference>
<dbReference type="Gene3D" id="3.20.20.60">
    <property type="entry name" value="Phosphoenolpyruvate-binding domains"/>
    <property type="match status" value="1"/>
</dbReference>
<dbReference type="HAMAP" id="MF_00156">
    <property type="entry name" value="PanB"/>
    <property type="match status" value="1"/>
</dbReference>
<dbReference type="InterPro" id="IPR003700">
    <property type="entry name" value="Pantoate_hydroxy_MeTrfase"/>
</dbReference>
<dbReference type="InterPro" id="IPR015813">
    <property type="entry name" value="Pyrv/PenolPyrv_kinase-like_dom"/>
</dbReference>
<dbReference type="InterPro" id="IPR040442">
    <property type="entry name" value="Pyrv_kinase-like_dom_sf"/>
</dbReference>
<dbReference type="NCBIfam" id="TIGR00222">
    <property type="entry name" value="panB"/>
    <property type="match status" value="1"/>
</dbReference>
<dbReference type="NCBIfam" id="NF001452">
    <property type="entry name" value="PRK00311.1"/>
    <property type="match status" value="1"/>
</dbReference>
<dbReference type="PANTHER" id="PTHR20881">
    <property type="entry name" value="3-METHYL-2-OXOBUTANOATE HYDROXYMETHYLTRANSFERASE"/>
    <property type="match status" value="1"/>
</dbReference>
<dbReference type="PANTHER" id="PTHR20881:SF0">
    <property type="entry name" value="3-METHYL-2-OXOBUTANOATE HYDROXYMETHYLTRANSFERASE"/>
    <property type="match status" value="1"/>
</dbReference>
<dbReference type="Pfam" id="PF02548">
    <property type="entry name" value="Pantoate_transf"/>
    <property type="match status" value="1"/>
</dbReference>
<dbReference type="PIRSF" id="PIRSF000388">
    <property type="entry name" value="Pantoate_hydroxy_MeTrfase"/>
    <property type="match status" value="1"/>
</dbReference>
<dbReference type="SUPFAM" id="SSF51621">
    <property type="entry name" value="Phosphoenolpyruvate/pyruvate domain"/>
    <property type="match status" value="1"/>
</dbReference>
<comment type="function">
    <text evidence="1">Catalyzes the reversible reaction in which hydroxymethyl group from 5,10-methylenetetrahydrofolate is transferred onto alpha-ketoisovalerate to form ketopantoate.</text>
</comment>
<comment type="catalytic activity">
    <reaction evidence="1">
        <text>3-methyl-2-oxobutanoate + (6R)-5,10-methylene-5,6,7,8-tetrahydrofolate + H2O = 2-dehydropantoate + (6S)-5,6,7,8-tetrahydrofolate</text>
        <dbReference type="Rhea" id="RHEA:11824"/>
        <dbReference type="ChEBI" id="CHEBI:11561"/>
        <dbReference type="ChEBI" id="CHEBI:11851"/>
        <dbReference type="ChEBI" id="CHEBI:15377"/>
        <dbReference type="ChEBI" id="CHEBI:15636"/>
        <dbReference type="ChEBI" id="CHEBI:57453"/>
        <dbReference type="EC" id="2.1.2.11"/>
    </reaction>
</comment>
<comment type="cofactor">
    <cofactor evidence="1">
        <name>Mg(2+)</name>
        <dbReference type="ChEBI" id="CHEBI:18420"/>
    </cofactor>
    <text evidence="1">Binds 1 Mg(2+) ion per subunit.</text>
</comment>
<comment type="pathway">
    <text evidence="1">Cofactor biosynthesis; (R)-pantothenate biosynthesis; (R)-pantoate from 3-methyl-2-oxobutanoate: step 1/2.</text>
</comment>
<comment type="subunit">
    <text evidence="2">Homodecamer; pentamer of dimers.</text>
</comment>
<comment type="subcellular location">
    <subcellularLocation>
        <location evidence="1">Cytoplasm</location>
    </subcellularLocation>
</comment>
<comment type="similarity">
    <text evidence="1">Belongs to the PanB family.</text>
</comment>